<evidence type="ECO:0000255" key="1">
    <source>
        <dbReference type="HAMAP-Rule" id="MF_00440"/>
    </source>
</evidence>
<reference key="1">
    <citation type="journal article" date="2011" name="J. Bacteriol.">
        <title>Comparative genomics of 28 Salmonella enterica isolates: evidence for CRISPR-mediated adaptive sublineage evolution.</title>
        <authorList>
            <person name="Fricke W.F."/>
            <person name="Mammel M.K."/>
            <person name="McDermott P.F."/>
            <person name="Tartera C."/>
            <person name="White D.G."/>
            <person name="Leclerc J.E."/>
            <person name="Ravel J."/>
            <person name="Cebula T.A."/>
        </authorList>
    </citation>
    <scope>NUCLEOTIDE SEQUENCE [LARGE SCALE GENOMIC DNA]</scope>
    <source>
        <strain>CVM19633</strain>
    </source>
</reference>
<feature type="chain" id="PRO_1000124547" description="Transcriptional repressor NrdR">
    <location>
        <begin position="1"/>
        <end position="149"/>
    </location>
</feature>
<feature type="domain" description="ATP-cone" evidence="1">
    <location>
        <begin position="49"/>
        <end position="139"/>
    </location>
</feature>
<feature type="zinc finger region" evidence="1">
    <location>
        <begin position="3"/>
        <end position="34"/>
    </location>
</feature>
<gene>
    <name evidence="1" type="primary">nrdR</name>
    <name type="ordered locus">SeSA_A0475</name>
</gene>
<keyword id="KW-0067">ATP-binding</keyword>
<keyword id="KW-0238">DNA-binding</keyword>
<keyword id="KW-0479">Metal-binding</keyword>
<keyword id="KW-0547">Nucleotide-binding</keyword>
<keyword id="KW-0678">Repressor</keyword>
<keyword id="KW-0804">Transcription</keyword>
<keyword id="KW-0805">Transcription regulation</keyword>
<keyword id="KW-0862">Zinc</keyword>
<keyword id="KW-0863">Zinc-finger</keyword>
<protein>
    <recommendedName>
        <fullName evidence="1">Transcriptional repressor NrdR</fullName>
    </recommendedName>
</protein>
<sequence length="149" mass="17198">MHCPFCFAVDTKVIDSRLVGEGSSVRRRRQCLVCNERFTTFEVAELVMPRVIKSNDVREPFNEDKLRSGMLRALEKRPVSADDVEMALNHIKSQLRATGEREVPSKMIGNLVMEQLKKLDKVAYIRFASVYRSFEDIKDFGEEIARLQD</sequence>
<name>NRDR_SALSV</name>
<comment type="function">
    <text evidence="1">Negatively regulates transcription of bacterial ribonucleotide reductase nrd genes and operons by binding to NrdR-boxes.</text>
</comment>
<comment type="cofactor">
    <cofactor evidence="1">
        <name>Zn(2+)</name>
        <dbReference type="ChEBI" id="CHEBI:29105"/>
    </cofactor>
    <text evidence="1">Binds 1 zinc ion.</text>
</comment>
<comment type="similarity">
    <text evidence="1">Belongs to the NrdR family.</text>
</comment>
<accession>B4TM95</accession>
<organism>
    <name type="scientific">Salmonella schwarzengrund (strain CVM19633)</name>
    <dbReference type="NCBI Taxonomy" id="439843"/>
    <lineage>
        <taxon>Bacteria</taxon>
        <taxon>Pseudomonadati</taxon>
        <taxon>Pseudomonadota</taxon>
        <taxon>Gammaproteobacteria</taxon>
        <taxon>Enterobacterales</taxon>
        <taxon>Enterobacteriaceae</taxon>
        <taxon>Salmonella</taxon>
    </lineage>
</organism>
<proteinExistence type="inferred from homology"/>
<dbReference type="EMBL" id="CP001127">
    <property type="protein sequence ID" value="ACF91079.1"/>
    <property type="molecule type" value="Genomic_DNA"/>
</dbReference>
<dbReference type="RefSeq" id="WP_000543533.1">
    <property type="nucleotide sequence ID" value="NC_011094.1"/>
</dbReference>
<dbReference type="SMR" id="B4TM95"/>
<dbReference type="GeneID" id="66754886"/>
<dbReference type="KEGG" id="sew:SeSA_A0475"/>
<dbReference type="HOGENOM" id="CLU_108412_0_0_6"/>
<dbReference type="Proteomes" id="UP000001865">
    <property type="component" value="Chromosome"/>
</dbReference>
<dbReference type="GO" id="GO:0005524">
    <property type="term" value="F:ATP binding"/>
    <property type="evidence" value="ECO:0007669"/>
    <property type="project" value="UniProtKB-KW"/>
</dbReference>
<dbReference type="GO" id="GO:0003677">
    <property type="term" value="F:DNA binding"/>
    <property type="evidence" value="ECO:0007669"/>
    <property type="project" value="UniProtKB-KW"/>
</dbReference>
<dbReference type="GO" id="GO:0008270">
    <property type="term" value="F:zinc ion binding"/>
    <property type="evidence" value="ECO:0007669"/>
    <property type="project" value="UniProtKB-UniRule"/>
</dbReference>
<dbReference type="GO" id="GO:0045892">
    <property type="term" value="P:negative regulation of DNA-templated transcription"/>
    <property type="evidence" value="ECO:0007669"/>
    <property type="project" value="UniProtKB-UniRule"/>
</dbReference>
<dbReference type="HAMAP" id="MF_00440">
    <property type="entry name" value="NrdR"/>
    <property type="match status" value="1"/>
</dbReference>
<dbReference type="InterPro" id="IPR005144">
    <property type="entry name" value="ATP-cone_dom"/>
</dbReference>
<dbReference type="InterPro" id="IPR055173">
    <property type="entry name" value="NrdR-like_N"/>
</dbReference>
<dbReference type="InterPro" id="IPR003796">
    <property type="entry name" value="RNR_NrdR-like"/>
</dbReference>
<dbReference type="NCBIfam" id="TIGR00244">
    <property type="entry name" value="transcriptional regulator NrdR"/>
    <property type="match status" value="1"/>
</dbReference>
<dbReference type="PANTHER" id="PTHR30455">
    <property type="entry name" value="TRANSCRIPTIONAL REPRESSOR NRDR"/>
    <property type="match status" value="1"/>
</dbReference>
<dbReference type="PANTHER" id="PTHR30455:SF2">
    <property type="entry name" value="TRANSCRIPTIONAL REPRESSOR NRDR"/>
    <property type="match status" value="1"/>
</dbReference>
<dbReference type="Pfam" id="PF03477">
    <property type="entry name" value="ATP-cone"/>
    <property type="match status" value="1"/>
</dbReference>
<dbReference type="Pfam" id="PF22811">
    <property type="entry name" value="Zn_ribbon_NrdR"/>
    <property type="match status" value="1"/>
</dbReference>
<dbReference type="PROSITE" id="PS51161">
    <property type="entry name" value="ATP_CONE"/>
    <property type="match status" value="1"/>
</dbReference>